<proteinExistence type="evidence at transcript level"/>
<sequence length="26" mass="3103">MTDCRYLIKRVIKIIIAVLQLILLFL</sequence>
<organism>
    <name type="scientific">Escherichia coli (strain K12)</name>
    <dbReference type="NCBI Taxonomy" id="83333"/>
    <lineage>
        <taxon>Bacteria</taxon>
        <taxon>Pseudomonadati</taxon>
        <taxon>Pseudomonadota</taxon>
        <taxon>Gammaproteobacteria</taxon>
        <taxon>Enterobacterales</taxon>
        <taxon>Enterobacteriaceae</taxon>
        <taxon>Escherichia</taxon>
    </lineage>
</organism>
<name>SHOB_ECOLI</name>
<accession>C1P611</accession>
<evidence type="ECO:0000255" key="1"/>
<evidence type="ECO:0000269" key="2">
    <source>
    </source>
</evidence>
<evidence type="ECO:0000305" key="3"/>
<comment type="function">
    <text evidence="2">Toxic component of a type I toxin-antitoxin (TA) system. May be a toxic protein; overexpression causes cessation of growth and rapid membrane depolarization. Overexpression induces stress-response and a number of membrane protein genes.</text>
</comment>
<comment type="subcellular location">
    <subcellularLocation>
        <location evidence="3">Membrane</location>
        <topology evidence="3">Single-pass membrane protein</topology>
    </subcellularLocation>
</comment>
<comment type="induction">
    <text evidence="2">In exponential phase. The ohsC RNA (previously known as ryfC) prevents the toxic effects of shoB overproduction, probably by repressing its translation. Expression of the proteinaceous toxin is controlled by antisense sRNA OhsC.</text>
</comment>
<comment type="miscellaneous">
    <text evidence="3">Entirely encoded within a small RNA previously known as ryfB.</text>
</comment>
<gene>
    <name type="primary">shoB</name>
    <name type="synonym">ryfB</name>
    <name type="synonym">yphI</name>
    <name type="ordered locus">b4687</name>
    <name type="ordered locus">JW2546.1</name>
</gene>
<keyword id="KW-0472">Membrane</keyword>
<keyword id="KW-1185">Reference proteome</keyword>
<keyword id="KW-1277">Toxin-antitoxin system</keyword>
<keyword id="KW-0812">Transmembrane</keyword>
<keyword id="KW-1133">Transmembrane helix</keyword>
<protein>
    <recommendedName>
        <fullName>Small toxic protein ShoB</fullName>
    </recommendedName>
</protein>
<reference key="1">
    <citation type="journal article" date="1997" name="Science">
        <title>The complete genome sequence of Escherichia coli K-12.</title>
        <authorList>
            <person name="Blattner F.R."/>
            <person name="Plunkett G. III"/>
            <person name="Bloch C.A."/>
            <person name="Perna N.T."/>
            <person name="Burland V."/>
            <person name="Riley M."/>
            <person name="Collado-Vides J."/>
            <person name="Glasner J.D."/>
            <person name="Rode C.K."/>
            <person name="Mayhew G.F."/>
            <person name="Gregor J."/>
            <person name="Davis N.W."/>
            <person name="Kirkpatrick H.A."/>
            <person name="Goeden M.A."/>
            <person name="Rose D.J."/>
            <person name="Mau B."/>
            <person name="Shao Y."/>
        </authorList>
    </citation>
    <scope>NUCLEOTIDE SEQUENCE [LARGE SCALE GENOMIC DNA]</scope>
    <source>
        <strain>K12 / MG1655 / ATCC 47076</strain>
    </source>
</reference>
<reference key="2">
    <citation type="journal article" date="2006" name="Mol. Syst. Biol.">
        <title>Highly accurate genome sequences of Escherichia coli K-12 strains MG1655 and W3110.</title>
        <authorList>
            <person name="Hayashi K."/>
            <person name="Morooka N."/>
            <person name="Yamamoto Y."/>
            <person name="Fujita K."/>
            <person name="Isono K."/>
            <person name="Choi S."/>
            <person name="Ohtsubo E."/>
            <person name="Baba T."/>
            <person name="Wanner B.L."/>
            <person name="Mori H."/>
            <person name="Horiuchi T."/>
        </authorList>
    </citation>
    <scope>NUCLEOTIDE SEQUENCE [LARGE SCALE GENOMIC DNA]</scope>
    <source>
        <strain>K12 / W3110 / ATCC 27325 / DSM 5911</strain>
    </source>
</reference>
<reference key="3">
    <citation type="journal article" date="2008" name="Mol. Microbiol.">
        <title>Repression of small toxic protein synthesis by the Sib and OhsC small RNAs.</title>
        <authorList>
            <person name="Fozo E.M."/>
            <person name="Kawano M."/>
            <person name="Fontaine F."/>
            <person name="Kaya Y."/>
            <person name="Mendieta K.S."/>
            <person name="Jones K.L."/>
            <person name="Ocampo A."/>
            <person name="Rudd K.E."/>
            <person name="Storz G."/>
        </authorList>
    </citation>
    <scope>IDENTIFICATION</scope>
    <scope>INDUCTION</scope>
    <scope>OVEREXPRESSION</scope>
    <source>
        <strain>K12 / MG1655 / ATCC 47076</strain>
    </source>
</reference>
<dbReference type="EMBL" id="U00096">
    <property type="protein sequence ID" value="ACO60003.1"/>
    <property type="molecule type" value="Genomic_DNA"/>
</dbReference>
<dbReference type="EMBL" id="AP009048">
    <property type="status" value="NOT_ANNOTATED_CDS"/>
    <property type="molecule type" value="Genomic_DNA"/>
</dbReference>
<dbReference type="RefSeq" id="WP_000128776.1">
    <property type="nucleotide sequence ID" value="NZ_STEB01000011.1"/>
</dbReference>
<dbReference type="RefSeq" id="YP_002791251.1">
    <property type="nucleotide sequence ID" value="NC_000913.3"/>
</dbReference>
<dbReference type="FunCoup" id="C1P611">
    <property type="interactions" value="1"/>
</dbReference>
<dbReference type="STRING" id="511145.b4687"/>
<dbReference type="TCDB" id="1.C.135.1.1">
    <property type="family name" value="the shob pore-forming toxin (shob) family"/>
</dbReference>
<dbReference type="PaxDb" id="511145-b4687"/>
<dbReference type="EnsemblBacteria" id="ACO60003">
    <property type="protein sequence ID" value="ACO60003"/>
    <property type="gene ID" value="b4687"/>
</dbReference>
<dbReference type="GeneID" id="7751620"/>
<dbReference type="GeneID" id="93774529"/>
<dbReference type="KEGG" id="eco:b4687"/>
<dbReference type="KEGG" id="ecoc:C3026_14185"/>
<dbReference type="PATRIC" id="fig|83333.103.peg.3447"/>
<dbReference type="InParanoid" id="C1P611"/>
<dbReference type="BioCyc" id="EcoCyc:MONOMER0-2860"/>
<dbReference type="PRO" id="PR:C1P611"/>
<dbReference type="Proteomes" id="UP000000625">
    <property type="component" value="Chromosome"/>
</dbReference>
<dbReference type="GO" id="GO:0016020">
    <property type="term" value="C:membrane"/>
    <property type="evidence" value="ECO:0007669"/>
    <property type="project" value="UniProtKB-SubCell"/>
</dbReference>
<dbReference type="GO" id="GO:0012501">
    <property type="term" value="P:programmed cell death"/>
    <property type="evidence" value="ECO:0000315"/>
    <property type="project" value="EcoCyc"/>
</dbReference>
<feature type="chain" id="PRO_0000386426" description="Small toxic protein ShoB">
    <location>
        <begin position="1"/>
        <end position="26"/>
    </location>
</feature>
<feature type="transmembrane region" description="Helical" evidence="1">
    <location>
        <begin position="7"/>
        <end position="24"/>
    </location>
</feature>